<evidence type="ECO:0000256" key="1">
    <source>
        <dbReference type="SAM" id="MobiDB-lite"/>
    </source>
</evidence>
<evidence type="ECO:0000305" key="2"/>
<feature type="chain" id="PRO_0000084546" description="Immunogenic miracidial antigen 8I'">
    <location>
        <begin position="1"/>
        <end position="139"/>
    </location>
</feature>
<feature type="region of interest" description="Disordered" evidence="1">
    <location>
        <begin position="61"/>
        <end position="139"/>
    </location>
</feature>
<feature type="compositionally biased region" description="Acidic residues" evidence="1">
    <location>
        <begin position="64"/>
        <end position="85"/>
    </location>
</feature>
<feature type="compositionally biased region" description="Polar residues" evidence="1">
    <location>
        <begin position="90"/>
        <end position="103"/>
    </location>
</feature>
<name>MA8J_SCHJA</name>
<accession>P13525</accession>
<proteinExistence type="evidence at transcript level"/>
<protein>
    <recommendedName>
        <fullName>Immunogenic miracidial antigen 8I'</fullName>
    </recommendedName>
</protein>
<sequence length="139" mass="15659">MCVCRVDILSRFDIALSLLQSLTHSHTVLRHLCFLPTIIYKHLCEFTISFSSPVISTGQHIDVGDEDYHDGDDDVDYTDDVDDVDDPHGSPSQLLQGGYQRNQHYGGGNYQSGYYRPNKQHGNGYGGQYPKKYGSGYKH</sequence>
<gene>
    <name type="primary">8I'</name>
</gene>
<comment type="developmental stage">
    <text>Miracidia.</text>
</comment>
<comment type="similarity">
    <text evidence="2">Belongs to the immunogenic miracidial antigen family.</text>
</comment>
<organism>
    <name type="scientific">Schistosoma japonicum</name>
    <name type="common">Blood fluke</name>
    <dbReference type="NCBI Taxonomy" id="6182"/>
    <lineage>
        <taxon>Eukaryota</taxon>
        <taxon>Metazoa</taxon>
        <taxon>Spiralia</taxon>
        <taxon>Lophotrochozoa</taxon>
        <taxon>Platyhelminthes</taxon>
        <taxon>Trematoda</taxon>
        <taxon>Digenea</taxon>
        <taxon>Strigeidida</taxon>
        <taxon>Schistosomatoidea</taxon>
        <taxon>Schistosomatidae</taxon>
        <taxon>Schistosoma</taxon>
    </lineage>
</organism>
<reference key="1">
    <citation type="journal article" date="1989" name="Mol. Biochem. Parasitol.">
        <title>Characterization of a large gene family in Schistosoma japonicum that encodes an immunogenic miracidial antigen.</title>
        <authorList>
            <person name="Scallon B.J."/>
            <person name="Bogitsh B.J."/>
            <person name="Carter C.E."/>
        </authorList>
    </citation>
    <scope>NUCLEOTIDE SEQUENCE [GENOMIC DNA]</scope>
    <source>
        <strain>Philippines</strain>
    </source>
</reference>
<dbReference type="EMBL" id="M26212">
    <property type="protein sequence ID" value="AAA29850.1"/>
    <property type="molecule type" value="Genomic_DNA"/>
</dbReference>
<dbReference type="InterPro" id="IPR026240">
    <property type="entry name" value="Miracidia_Ag_8I"/>
</dbReference>
<dbReference type="PRINTS" id="PR02101">
    <property type="entry name" value="A8IMIRACIDIA"/>
</dbReference>